<accession>P69796</accession>
<accession>P17409</accession>
<proteinExistence type="inferred from homology"/>
<reference key="1">
    <citation type="journal article" date="2002" name="Proc. Natl. Acad. Sci. U.S.A.">
        <title>Extensive mosaic structure revealed by the complete genome sequence of uropathogenic Escherichia coli.</title>
        <authorList>
            <person name="Welch R.A."/>
            <person name="Burland V."/>
            <person name="Plunkett G. III"/>
            <person name="Redford P."/>
            <person name="Roesch P."/>
            <person name="Rasko D."/>
            <person name="Buckles E.L."/>
            <person name="Liou S.-R."/>
            <person name="Boutin A."/>
            <person name="Hackett J."/>
            <person name="Stroud D."/>
            <person name="Mayhew G.F."/>
            <person name="Rose D.J."/>
            <person name="Zhou S."/>
            <person name="Schwartz D.C."/>
            <person name="Perna N.T."/>
            <person name="Mobley H.L.T."/>
            <person name="Donnenberg M.S."/>
            <person name="Blattner F.R."/>
        </authorList>
    </citation>
    <scope>NUCLEOTIDE SEQUENCE [LARGE SCALE GENOMIC DNA]</scope>
    <source>
        <strain>CFT073 / ATCC 700928 / UPEC</strain>
    </source>
</reference>
<comment type="function">
    <text evidence="1">The phosphoenolpyruvate-dependent sugar phosphotransferase system (sugar PTS), a major carbohydrate active transport system, catalyzes the phosphorylation of incoming sugar substrates concomitantly with their translocation across the cell membrane. The enzyme II ChbABC PTS system is involved in the transport of the chitin disaccharide N,N'-diacetylchitobiose (GlcNAc2).</text>
</comment>
<comment type="catalytic activity">
    <reaction evidence="1">
        <text>N,N'-diacetylchitobiose(out) + N(pros)-phospho-L-histidyl-[protein] = diacetylchitobiose-6'-phosphate(in) + L-histidyl-[protein]</text>
        <dbReference type="Rhea" id="RHEA:33423"/>
        <dbReference type="Rhea" id="RHEA-COMP:9745"/>
        <dbReference type="Rhea" id="RHEA-COMP:9746"/>
        <dbReference type="ChEBI" id="CHEBI:28681"/>
        <dbReference type="ChEBI" id="CHEBI:29979"/>
        <dbReference type="ChEBI" id="CHEBI:64837"/>
        <dbReference type="ChEBI" id="CHEBI:64883"/>
        <dbReference type="EC" id="2.7.1.196"/>
    </reaction>
</comment>
<comment type="subunit">
    <text evidence="1">Forms a complex with ChbA (EIIA). ChbB is a monomer in both its unphosphorylated and phosphorylated forms.</text>
</comment>
<comment type="subcellular location">
    <subcellularLocation>
        <location evidence="3">Cytoplasm</location>
    </subcellularLocation>
</comment>
<comment type="induction">
    <text evidence="1">By GlcNAc2, GlcNAc3 and beta-N,N'-diacetylchitobiose (Me-TCB).</text>
</comment>
<comment type="domain">
    <text evidence="2">The PTS EIIB type-3 domain is phosphorylated by phospho-EIIA on a cysteinyl residue. Then, it transfers the phosphoryl group to the sugar substrate concomitantly with the sugar uptake processed by the PTS EIIC type-3 domain.</text>
</comment>
<protein>
    <recommendedName>
        <fullName evidence="1">PTS system N,N'-diacetylchitobiose-specific EIIB component</fullName>
    </recommendedName>
    <alternativeName>
        <fullName evidence="1">EIIB-Chb</fullName>
    </alternativeName>
    <alternativeName>
        <fullName evidence="1">IVcel</fullName>
    </alternativeName>
    <alternativeName>
        <fullName evidence="1">N,N'-diacetylchitobiose-specific phosphotransferase enzyme IIB component</fullName>
        <ecNumber evidence="1">2.7.1.196</ecNumber>
    </alternativeName>
</protein>
<organism>
    <name type="scientific">Escherichia coli O6:H1 (strain CFT073 / ATCC 700928 / UPEC)</name>
    <dbReference type="NCBI Taxonomy" id="199310"/>
    <lineage>
        <taxon>Bacteria</taxon>
        <taxon>Pseudomonadati</taxon>
        <taxon>Pseudomonadota</taxon>
        <taxon>Gammaproteobacteria</taxon>
        <taxon>Enterobacterales</taxon>
        <taxon>Enterobacteriaceae</taxon>
        <taxon>Escherichia</taxon>
    </lineage>
</organism>
<evidence type="ECO:0000250" key="1">
    <source>
        <dbReference type="UniProtKB" id="P69795"/>
    </source>
</evidence>
<evidence type="ECO:0000255" key="2">
    <source>
        <dbReference type="PROSITE-ProRule" id="PRU00423"/>
    </source>
</evidence>
<evidence type="ECO:0000305" key="3"/>
<name>PTQB_ECOL6</name>
<sequence>MEKKHIYLFCSAGMSTSLLVSKMRAQAEKYEVPVIIEAFPETLAGEKGQNADVVLLGPQIAYMLPEIQRLLPNKPVEVIDSLLYGKVDGLGVLKAAVAAIKKAAAN</sequence>
<keyword id="KW-0963">Cytoplasm</keyword>
<keyword id="KW-0418">Kinase</keyword>
<keyword id="KW-0597">Phosphoprotein</keyword>
<keyword id="KW-0598">Phosphotransferase system</keyword>
<keyword id="KW-1185">Reference proteome</keyword>
<keyword id="KW-0762">Sugar transport</keyword>
<keyword id="KW-0808">Transferase</keyword>
<keyword id="KW-0813">Transport</keyword>
<feature type="chain" id="PRO_0000186490" description="PTS system N,N'-diacetylchitobiose-specific EIIB component">
    <location>
        <begin position="1"/>
        <end position="106"/>
    </location>
</feature>
<feature type="domain" description="PTS EIIB type-3" evidence="2">
    <location>
        <begin position="3"/>
        <end position="106"/>
    </location>
</feature>
<feature type="active site" description="Phosphocysteine intermediate" evidence="1">
    <location>
        <position position="10"/>
    </location>
</feature>
<feature type="modified residue" description="Phosphocysteine; by EIIA" evidence="2">
    <location>
        <position position="10"/>
    </location>
</feature>
<gene>
    <name type="primary">chbB</name>
    <name type="synonym">celA</name>
    <name type="ordered locus">c2137</name>
</gene>
<dbReference type="EC" id="2.7.1.196" evidence="1"/>
<dbReference type="EMBL" id="AE014075">
    <property type="protein sequence ID" value="AAN80596.1"/>
    <property type="molecule type" value="Genomic_DNA"/>
</dbReference>
<dbReference type="RefSeq" id="WP_000412169.1">
    <property type="nucleotide sequence ID" value="NZ_CP051263.1"/>
</dbReference>
<dbReference type="BMRB" id="P69796"/>
<dbReference type="SMR" id="P69796"/>
<dbReference type="STRING" id="199310.c2137"/>
<dbReference type="GeneID" id="93775951"/>
<dbReference type="KEGG" id="ecc:c2137"/>
<dbReference type="eggNOG" id="COG1440">
    <property type="taxonomic scope" value="Bacteria"/>
</dbReference>
<dbReference type="HOGENOM" id="CLU_147323_2_0_6"/>
<dbReference type="BioCyc" id="ECOL199310:C2137-MONOMER"/>
<dbReference type="Proteomes" id="UP000001410">
    <property type="component" value="Chromosome"/>
</dbReference>
<dbReference type="GO" id="GO:0005737">
    <property type="term" value="C:cytoplasm"/>
    <property type="evidence" value="ECO:0007669"/>
    <property type="project" value="UniProtKB-SubCell"/>
</dbReference>
<dbReference type="GO" id="GO:0016301">
    <property type="term" value="F:kinase activity"/>
    <property type="evidence" value="ECO:0007669"/>
    <property type="project" value="UniProtKB-KW"/>
</dbReference>
<dbReference type="GO" id="GO:0008982">
    <property type="term" value="F:protein-N(PI)-phosphohistidine-sugar phosphotransferase activity"/>
    <property type="evidence" value="ECO:0007669"/>
    <property type="project" value="InterPro"/>
</dbReference>
<dbReference type="GO" id="GO:0009401">
    <property type="term" value="P:phosphoenolpyruvate-dependent sugar phosphotransferase system"/>
    <property type="evidence" value="ECO:0007669"/>
    <property type="project" value="UniProtKB-KW"/>
</dbReference>
<dbReference type="CDD" id="cd05564">
    <property type="entry name" value="PTS_IIB_chitobiose_lichenan"/>
    <property type="match status" value="1"/>
</dbReference>
<dbReference type="FunFam" id="3.40.50.2300:FF:000017">
    <property type="entry name" value="PTS sugar transporter subunit IIB"/>
    <property type="match status" value="1"/>
</dbReference>
<dbReference type="Gene3D" id="3.40.50.2300">
    <property type="match status" value="1"/>
</dbReference>
<dbReference type="InterPro" id="IPR036095">
    <property type="entry name" value="PTS_EIIB-like_sf"/>
</dbReference>
<dbReference type="InterPro" id="IPR003501">
    <property type="entry name" value="PTS_EIIB_2/3"/>
</dbReference>
<dbReference type="InterPro" id="IPR013012">
    <property type="entry name" value="PTS_EIIB_3"/>
</dbReference>
<dbReference type="InterPro" id="IPR051819">
    <property type="entry name" value="PTS_sugar-specific_EIIB"/>
</dbReference>
<dbReference type="NCBIfam" id="NF007796">
    <property type="entry name" value="PRK10499.1"/>
    <property type="match status" value="1"/>
</dbReference>
<dbReference type="NCBIfam" id="TIGR00853">
    <property type="entry name" value="pts-lac"/>
    <property type="match status" value="1"/>
</dbReference>
<dbReference type="PANTHER" id="PTHR34581">
    <property type="entry name" value="PTS SYSTEM N,N'-DIACETYLCHITOBIOSE-SPECIFIC EIIB COMPONENT"/>
    <property type="match status" value="1"/>
</dbReference>
<dbReference type="PANTHER" id="PTHR34581:SF2">
    <property type="entry name" value="PTS SYSTEM N,N'-DIACETYLCHITOBIOSE-SPECIFIC EIIB COMPONENT"/>
    <property type="match status" value="1"/>
</dbReference>
<dbReference type="Pfam" id="PF02302">
    <property type="entry name" value="PTS_IIB"/>
    <property type="match status" value="1"/>
</dbReference>
<dbReference type="SUPFAM" id="SSF52794">
    <property type="entry name" value="PTS system IIB component-like"/>
    <property type="match status" value="1"/>
</dbReference>
<dbReference type="PROSITE" id="PS51100">
    <property type="entry name" value="PTS_EIIB_TYPE_3"/>
    <property type="match status" value="1"/>
</dbReference>